<name>NUON_NOCSJ</name>
<reference key="1">
    <citation type="submission" date="2006-12" db="EMBL/GenBank/DDBJ databases">
        <title>Complete sequence of chromosome 1 of Nocardioides sp. JS614.</title>
        <authorList>
            <person name="Copeland A."/>
            <person name="Lucas S."/>
            <person name="Lapidus A."/>
            <person name="Barry K."/>
            <person name="Detter J.C."/>
            <person name="Glavina del Rio T."/>
            <person name="Hammon N."/>
            <person name="Israni S."/>
            <person name="Dalin E."/>
            <person name="Tice H."/>
            <person name="Pitluck S."/>
            <person name="Thompson L.S."/>
            <person name="Brettin T."/>
            <person name="Bruce D."/>
            <person name="Han C."/>
            <person name="Tapia R."/>
            <person name="Schmutz J."/>
            <person name="Larimer F."/>
            <person name="Land M."/>
            <person name="Hauser L."/>
            <person name="Kyrpides N."/>
            <person name="Kim E."/>
            <person name="Mattes T."/>
            <person name="Gossett J."/>
            <person name="Richardson P."/>
        </authorList>
    </citation>
    <scope>NUCLEOTIDE SEQUENCE [LARGE SCALE GENOMIC DNA]</scope>
    <source>
        <strain>ATCC BAA-499 / JS614</strain>
    </source>
</reference>
<feature type="chain" id="PRO_0000391191" description="NADH-quinone oxidoreductase subunit N">
    <location>
        <begin position="1"/>
        <end position="533"/>
    </location>
</feature>
<feature type="transmembrane region" description="Helical" evidence="1">
    <location>
        <begin position="13"/>
        <end position="33"/>
    </location>
</feature>
<feature type="transmembrane region" description="Helical" evidence="1">
    <location>
        <begin position="40"/>
        <end position="60"/>
    </location>
</feature>
<feature type="transmembrane region" description="Helical" evidence="1">
    <location>
        <begin position="87"/>
        <end position="107"/>
    </location>
</feature>
<feature type="transmembrane region" description="Helical" evidence="1">
    <location>
        <begin position="141"/>
        <end position="161"/>
    </location>
</feature>
<feature type="transmembrane region" description="Helical" evidence="1">
    <location>
        <begin position="164"/>
        <end position="184"/>
    </location>
</feature>
<feature type="transmembrane region" description="Helical" evidence="1">
    <location>
        <begin position="200"/>
        <end position="220"/>
    </location>
</feature>
<feature type="transmembrane region" description="Helical" evidence="1">
    <location>
        <begin position="243"/>
        <end position="263"/>
    </location>
</feature>
<feature type="transmembrane region" description="Helical" evidence="1">
    <location>
        <begin position="275"/>
        <end position="295"/>
    </location>
</feature>
<feature type="transmembrane region" description="Helical" evidence="1">
    <location>
        <begin position="310"/>
        <end position="330"/>
    </location>
</feature>
<feature type="transmembrane region" description="Helical" evidence="1">
    <location>
        <begin position="337"/>
        <end position="357"/>
    </location>
</feature>
<feature type="transmembrane region" description="Helical" evidence="1">
    <location>
        <begin position="373"/>
        <end position="393"/>
    </location>
</feature>
<feature type="transmembrane region" description="Helical" evidence="1">
    <location>
        <begin position="417"/>
        <end position="437"/>
    </location>
</feature>
<feature type="transmembrane region" description="Helical" evidence="1">
    <location>
        <begin position="451"/>
        <end position="471"/>
    </location>
</feature>
<feature type="transmembrane region" description="Helical" evidence="1">
    <location>
        <begin position="502"/>
        <end position="522"/>
    </location>
</feature>
<sequence>MDFIKPTIEYGDVWPLLVVFGVAAVGVLVEGFVPRAQRYLVQAALAIAGVVVALVGTILVARDLDVLGDGAARGAIDVEGTIAVDGPALFIWGMLLVFALGGALLFAERRLEGGVSAFAGQAAALPGTEAERQASTRGLEHTEVYPLMMFALGGMMLFAAANDLLTLFVALEVLSLPLYLLSGLARRRRLLSQEAALKYFMLGAFSSGFFLYGAALVYGFSGSMGFAEINEAVRDDVGNQTLLLIGIGMLSVGLLFKVGAVPFHSWTPDVYQGAPTAVTAFMAAGTKIAAFGAMLRLFYVAFGSDRWSWQPMLWIIAILTMLVGALIAIVQTDMKRMLAYSSVAHTGFLLTGVLGVQQASELADGEVTSLQAVLFYLVTYGFAVVGAFAVVTLVRDAGGEAGQFVRWRGIGRRSPLVAGVFAFFLLSMAGIPLTAGFVGKWAVFTVALAAGAWPVVIAAVLCSIIAVFFYVRVILLMFFEDDDVSAQGEVASVTKPSVLTSATIFVGVAATLVLGVVPGPVLDLAANAGQFVR</sequence>
<evidence type="ECO:0000255" key="1">
    <source>
        <dbReference type="HAMAP-Rule" id="MF_00445"/>
    </source>
</evidence>
<protein>
    <recommendedName>
        <fullName evidence="1">NADH-quinone oxidoreductase subunit N</fullName>
        <ecNumber evidence="1">7.1.1.-</ecNumber>
    </recommendedName>
    <alternativeName>
        <fullName evidence="1">NADH dehydrogenase I subunit N</fullName>
    </alternativeName>
    <alternativeName>
        <fullName evidence="1">NDH-1 subunit N</fullName>
    </alternativeName>
</protein>
<accession>A1SE40</accession>
<organism>
    <name type="scientific">Nocardioides sp. (strain ATCC BAA-499 / JS614)</name>
    <dbReference type="NCBI Taxonomy" id="196162"/>
    <lineage>
        <taxon>Bacteria</taxon>
        <taxon>Bacillati</taxon>
        <taxon>Actinomycetota</taxon>
        <taxon>Actinomycetes</taxon>
        <taxon>Propionibacteriales</taxon>
        <taxon>Nocardioidaceae</taxon>
        <taxon>Nocardioides</taxon>
    </lineage>
</organism>
<gene>
    <name evidence="1" type="primary">nuoN</name>
    <name type="ordered locus">Noca_0533</name>
</gene>
<comment type="function">
    <text evidence="1">NDH-1 shuttles electrons from NADH, via FMN and iron-sulfur (Fe-S) centers, to quinones in the respiratory chain. The immediate electron acceptor for the enzyme in this species is believed to be a menaquinone. Couples the redox reaction to proton translocation (for every two electrons transferred, four hydrogen ions are translocated across the cytoplasmic membrane), and thus conserves the redox energy in a proton gradient.</text>
</comment>
<comment type="catalytic activity">
    <reaction evidence="1">
        <text>a quinone + NADH + 5 H(+)(in) = a quinol + NAD(+) + 4 H(+)(out)</text>
        <dbReference type="Rhea" id="RHEA:57888"/>
        <dbReference type="ChEBI" id="CHEBI:15378"/>
        <dbReference type="ChEBI" id="CHEBI:24646"/>
        <dbReference type="ChEBI" id="CHEBI:57540"/>
        <dbReference type="ChEBI" id="CHEBI:57945"/>
        <dbReference type="ChEBI" id="CHEBI:132124"/>
    </reaction>
</comment>
<comment type="subunit">
    <text evidence="1">NDH-1 is composed of 14 different subunits. Subunits NuoA, H, J, K, L, M, N constitute the membrane sector of the complex.</text>
</comment>
<comment type="subcellular location">
    <subcellularLocation>
        <location evidence="1">Cell membrane</location>
        <topology evidence="1">Multi-pass membrane protein</topology>
    </subcellularLocation>
</comment>
<comment type="similarity">
    <text evidence="1">Belongs to the complex I subunit 2 family.</text>
</comment>
<dbReference type="EC" id="7.1.1.-" evidence="1"/>
<dbReference type="EMBL" id="CP000509">
    <property type="protein sequence ID" value="ABL80075.1"/>
    <property type="molecule type" value="Genomic_DNA"/>
</dbReference>
<dbReference type="RefSeq" id="WP_011754025.1">
    <property type="nucleotide sequence ID" value="NC_008699.1"/>
</dbReference>
<dbReference type="SMR" id="A1SE40"/>
<dbReference type="STRING" id="196162.Noca_0533"/>
<dbReference type="KEGG" id="nca:Noca_0533"/>
<dbReference type="eggNOG" id="COG1007">
    <property type="taxonomic scope" value="Bacteria"/>
</dbReference>
<dbReference type="HOGENOM" id="CLU_007100_1_1_11"/>
<dbReference type="OrthoDB" id="9811718at2"/>
<dbReference type="Proteomes" id="UP000000640">
    <property type="component" value="Chromosome"/>
</dbReference>
<dbReference type="GO" id="GO:0005886">
    <property type="term" value="C:plasma membrane"/>
    <property type="evidence" value="ECO:0007669"/>
    <property type="project" value="UniProtKB-SubCell"/>
</dbReference>
<dbReference type="GO" id="GO:0008137">
    <property type="term" value="F:NADH dehydrogenase (ubiquinone) activity"/>
    <property type="evidence" value="ECO:0007669"/>
    <property type="project" value="InterPro"/>
</dbReference>
<dbReference type="GO" id="GO:0050136">
    <property type="term" value="F:NADH:ubiquinone reductase (non-electrogenic) activity"/>
    <property type="evidence" value="ECO:0007669"/>
    <property type="project" value="UniProtKB-UniRule"/>
</dbReference>
<dbReference type="GO" id="GO:0048038">
    <property type="term" value="F:quinone binding"/>
    <property type="evidence" value="ECO:0007669"/>
    <property type="project" value="UniProtKB-KW"/>
</dbReference>
<dbReference type="GO" id="GO:0042773">
    <property type="term" value="P:ATP synthesis coupled electron transport"/>
    <property type="evidence" value="ECO:0007669"/>
    <property type="project" value="InterPro"/>
</dbReference>
<dbReference type="HAMAP" id="MF_00445">
    <property type="entry name" value="NDH1_NuoN_1"/>
    <property type="match status" value="1"/>
</dbReference>
<dbReference type="InterPro" id="IPR010096">
    <property type="entry name" value="NADH-Q_OxRdtase_suN/2"/>
</dbReference>
<dbReference type="InterPro" id="IPR001750">
    <property type="entry name" value="ND/Mrp_TM"/>
</dbReference>
<dbReference type="NCBIfam" id="TIGR01770">
    <property type="entry name" value="NDH_I_N"/>
    <property type="match status" value="1"/>
</dbReference>
<dbReference type="NCBIfam" id="NF004441">
    <property type="entry name" value="PRK05777.1-4"/>
    <property type="match status" value="1"/>
</dbReference>
<dbReference type="PANTHER" id="PTHR22773">
    <property type="entry name" value="NADH DEHYDROGENASE"/>
    <property type="match status" value="1"/>
</dbReference>
<dbReference type="Pfam" id="PF00361">
    <property type="entry name" value="Proton_antipo_M"/>
    <property type="match status" value="1"/>
</dbReference>
<proteinExistence type="inferred from homology"/>
<keyword id="KW-1003">Cell membrane</keyword>
<keyword id="KW-0472">Membrane</keyword>
<keyword id="KW-0520">NAD</keyword>
<keyword id="KW-0874">Quinone</keyword>
<keyword id="KW-1185">Reference proteome</keyword>
<keyword id="KW-1278">Translocase</keyword>
<keyword id="KW-0812">Transmembrane</keyword>
<keyword id="KW-1133">Transmembrane helix</keyword>
<keyword id="KW-0813">Transport</keyword>